<comment type="function">
    <text evidence="1">Binds to DNA and alters its conformation. May be involved in regulation of gene expression, nucleoid organization and DNA protection.</text>
</comment>
<comment type="subunit">
    <text evidence="1">Homodimer.</text>
</comment>
<comment type="subcellular location">
    <subcellularLocation>
        <location evidence="1">Cytoplasm</location>
        <location evidence="1">Nucleoid</location>
    </subcellularLocation>
</comment>
<comment type="similarity">
    <text evidence="1">Belongs to the YbaB/EbfC family.</text>
</comment>
<name>Y1509_SHEPA</name>
<reference key="1">
    <citation type="submission" date="2007-10" db="EMBL/GenBank/DDBJ databases">
        <title>Complete sequence of Shewanella pealeana ATCC 700345.</title>
        <authorList>
            <consortium name="US DOE Joint Genome Institute"/>
            <person name="Copeland A."/>
            <person name="Lucas S."/>
            <person name="Lapidus A."/>
            <person name="Barry K."/>
            <person name="Glavina del Rio T."/>
            <person name="Dalin E."/>
            <person name="Tice H."/>
            <person name="Pitluck S."/>
            <person name="Chertkov O."/>
            <person name="Brettin T."/>
            <person name="Bruce D."/>
            <person name="Detter J.C."/>
            <person name="Han C."/>
            <person name="Schmutz J."/>
            <person name="Larimer F."/>
            <person name="Land M."/>
            <person name="Hauser L."/>
            <person name="Kyrpides N."/>
            <person name="Kim E."/>
            <person name="Zhao J.-S.Z."/>
            <person name="Manno D."/>
            <person name="Hawari J."/>
            <person name="Richardson P."/>
        </authorList>
    </citation>
    <scope>NUCLEOTIDE SEQUENCE [LARGE SCALE GENOMIC DNA]</scope>
    <source>
        <strain>ATCC 700345 / ANG-SQ1</strain>
    </source>
</reference>
<feature type="chain" id="PRO_1000078773" description="Nucleoid-associated protein Spea_1509">
    <location>
        <begin position="1"/>
        <end position="109"/>
    </location>
</feature>
<feature type="region of interest" description="Disordered" evidence="2">
    <location>
        <begin position="87"/>
        <end position="109"/>
    </location>
</feature>
<organism>
    <name type="scientific">Shewanella pealeana (strain ATCC 700345 / ANG-SQ1)</name>
    <dbReference type="NCBI Taxonomy" id="398579"/>
    <lineage>
        <taxon>Bacteria</taxon>
        <taxon>Pseudomonadati</taxon>
        <taxon>Pseudomonadota</taxon>
        <taxon>Gammaproteobacteria</taxon>
        <taxon>Alteromonadales</taxon>
        <taxon>Shewanellaceae</taxon>
        <taxon>Shewanella</taxon>
    </lineage>
</organism>
<evidence type="ECO:0000255" key="1">
    <source>
        <dbReference type="HAMAP-Rule" id="MF_00274"/>
    </source>
</evidence>
<evidence type="ECO:0000256" key="2">
    <source>
        <dbReference type="SAM" id="MobiDB-lite"/>
    </source>
</evidence>
<gene>
    <name type="ordered locus">Spea_1509</name>
</gene>
<protein>
    <recommendedName>
        <fullName evidence="1">Nucleoid-associated protein Spea_1509</fullName>
    </recommendedName>
</protein>
<keyword id="KW-0963">Cytoplasm</keyword>
<keyword id="KW-0238">DNA-binding</keyword>
<keyword id="KW-1185">Reference proteome</keyword>
<accession>A8H2P7</accession>
<sequence length="109" mass="11864">MFGKGGMGNLMKQAQMMQDKMAKVQEEIARMEVTGEAGAGLVKVTMTGSHSVRKVDIDASLLEDDKEMLEDLIAAACNDAARRVEENQKEKMAEVTGGMQLPPGMKMPF</sequence>
<dbReference type="EMBL" id="CP000851">
    <property type="protein sequence ID" value="ABV86834.1"/>
    <property type="molecule type" value="Genomic_DNA"/>
</dbReference>
<dbReference type="RefSeq" id="WP_012154758.1">
    <property type="nucleotide sequence ID" value="NC_009901.1"/>
</dbReference>
<dbReference type="SMR" id="A8H2P7"/>
<dbReference type="STRING" id="398579.Spea_1509"/>
<dbReference type="KEGG" id="spl:Spea_1509"/>
<dbReference type="eggNOG" id="COG0718">
    <property type="taxonomic scope" value="Bacteria"/>
</dbReference>
<dbReference type="HOGENOM" id="CLU_140930_0_0_6"/>
<dbReference type="OrthoDB" id="9808738at2"/>
<dbReference type="Proteomes" id="UP000002608">
    <property type="component" value="Chromosome"/>
</dbReference>
<dbReference type="GO" id="GO:0043590">
    <property type="term" value="C:bacterial nucleoid"/>
    <property type="evidence" value="ECO:0007669"/>
    <property type="project" value="UniProtKB-UniRule"/>
</dbReference>
<dbReference type="GO" id="GO:0005829">
    <property type="term" value="C:cytosol"/>
    <property type="evidence" value="ECO:0007669"/>
    <property type="project" value="TreeGrafter"/>
</dbReference>
<dbReference type="GO" id="GO:0003677">
    <property type="term" value="F:DNA binding"/>
    <property type="evidence" value="ECO:0007669"/>
    <property type="project" value="UniProtKB-UniRule"/>
</dbReference>
<dbReference type="FunFam" id="3.30.1310.10:FF:000001">
    <property type="entry name" value="Nucleoid-associated protein YbaB"/>
    <property type="match status" value="1"/>
</dbReference>
<dbReference type="Gene3D" id="3.30.1310.10">
    <property type="entry name" value="Nucleoid-associated protein YbaB-like domain"/>
    <property type="match status" value="1"/>
</dbReference>
<dbReference type="HAMAP" id="MF_00274">
    <property type="entry name" value="DNA_YbaB_EbfC"/>
    <property type="match status" value="1"/>
</dbReference>
<dbReference type="InterPro" id="IPR036894">
    <property type="entry name" value="YbaB-like_sf"/>
</dbReference>
<dbReference type="InterPro" id="IPR004401">
    <property type="entry name" value="YbaB/EbfC"/>
</dbReference>
<dbReference type="NCBIfam" id="TIGR00103">
    <property type="entry name" value="DNA_YbaB_EbfC"/>
    <property type="match status" value="1"/>
</dbReference>
<dbReference type="PANTHER" id="PTHR33449">
    <property type="entry name" value="NUCLEOID-ASSOCIATED PROTEIN YBAB"/>
    <property type="match status" value="1"/>
</dbReference>
<dbReference type="PANTHER" id="PTHR33449:SF1">
    <property type="entry name" value="NUCLEOID-ASSOCIATED PROTEIN YBAB"/>
    <property type="match status" value="1"/>
</dbReference>
<dbReference type="Pfam" id="PF02575">
    <property type="entry name" value="YbaB_DNA_bd"/>
    <property type="match status" value="1"/>
</dbReference>
<dbReference type="PIRSF" id="PIRSF004555">
    <property type="entry name" value="UCP004555"/>
    <property type="match status" value="1"/>
</dbReference>
<dbReference type="SUPFAM" id="SSF82607">
    <property type="entry name" value="YbaB-like"/>
    <property type="match status" value="1"/>
</dbReference>
<proteinExistence type="inferred from homology"/>